<comment type="function">
    <text evidence="1">RNA polymerase that catalyzes the synthesis of short RNA molecules used as primers for DNA polymerase during DNA replication.</text>
</comment>
<comment type="catalytic activity">
    <reaction evidence="1">
        <text>ssDNA + n NTP = ssDNA/pppN(pN)n-1 hybrid + (n-1) diphosphate.</text>
        <dbReference type="EC" id="2.7.7.101"/>
    </reaction>
</comment>
<comment type="cofactor">
    <cofactor evidence="1">
        <name>Mg(2+)</name>
        <dbReference type="ChEBI" id="CHEBI:18420"/>
    </cofactor>
    <text evidence="1">Binds two Mg(2+) per subunit.</text>
</comment>
<comment type="subunit">
    <text evidence="1">Forms a ternary complex with MCM helicase and DNA.</text>
</comment>
<comment type="similarity">
    <text evidence="1">Belongs to the archaeal DnaG primase family.</text>
</comment>
<sequence>MKDTEKYLIHANIAADGVVERSDVVGAVFGQTEGLLGDELDLRDLQESSRVGRIDVAVESENGQSFGEVTVASSLDKVETAILAAALETIDRIGPCHASVEVTSIEDVRAAKRREVVERAKELVAGGFEETSLASDDILDEVREAARVEGIVDYEGLPAGPRVGDSDAVIVVEGRADVLTLLECGIKNAVAVEGTNVPDAVADLTADRTVTAFLDGDRGGELILRELAQVGDVDYVAFAPPGESVEDLDRNTVFEALRGKVPYSSLADEPNLREAATDDSGSAPIDNEGRGRSGEMSEPSESETESERASDGGDDGDAGVVAGGARSATDRGLVDAVEDTPAPAATDAGEVDEVGEDREGDMESDSDTADINDAEFDDRAADDPNLDEAADAESVEETDAPLDNEPRSIEEHVQEIVDAGSDRARLLGDDRGVLAEIDAVDAFDAIEDAETAPHTVVVDGLIDQRLLDVAAQRGVSELLGREVGEFVKRPVGTRVLTVGDLRTGS</sequence>
<gene>
    <name evidence="1" type="primary">dnaG</name>
    <name type="ordered locus">Hlac_2135</name>
</gene>
<protein>
    <recommendedName>
        <fullName evidence="1">DNA primase DnaG</fullName>
        <ecNumber evidence="1">2.7.7.101</ecNumber>
    </recommendedName>
</protein>
<accession>B9LR58</accession>
<keyword id="KW-0235">DNA replication</keyword>
<keyword id="KW-0240">DNA-directed RNA polymerase</keyword>
<keyword id="KW-0460">Magnesium</keyword>
<keyword id="KW-0479">Metal-binding</keyword>
<keyword id="KW-0548">Nucleotidyltransferase</keyword>
<keyword id="KW-0639">Primosome</keyword>
<keyword id="KW-1185">Reference proteome</keyword>
<keyword id="KW-0804">Transcription</keyword>
<keyword id="KW-0808">Transferase</keyword>
<proteinExistence type="inferred from homology"/>
<organism>
    <name type="scientific">Halorubrum lacusprofundi (strain ATCC 49239 / DSM 5036 / JCM 8891 / ACAM 34)</name>
    <dbReference type="NCBI Taxonomy" id="416348"/>
    <lineage>
        <taxon>Archaea</taxon>
        <taxon>Methanobacteriati</taxon>
        <taxon>Methanobacteriota</taxon>
        <taxon>Stenosarchaea group</taxon>
        <taxon>Halobacteria</taxon>
        <taxon>Halobacteriales</taxon>
        <taxon>Haloferacaceae</taxon>
        <taxon>Halorubrum</taxon>
    </lineage>
</organism>
<evidence type="ECO:0000255" key="1">
    <source>
        <dbReference type="HAMAP-Rule" id="MF_00007"/>
    </source>
</evidence>
<evidence type="ECO:0000256" key="2">
    <source>
        <dbReference type="SAM" id="MobiDB-lite"/>
    </source>
</evidence>
<dbReference type="EC" id="2.7.7.101" evidence="1"/>
<dbReference type="EMBL" id="CP001365">
    <property type="protein sequence ID" value="ACM57712.1"/>
    <property type="molecule type" value="Genomic_DNA"/>
</dbReference>
<dbReference type="RefSeq" id="WP_015910835.1">
    <property type="nucleotide sequence ID" value="NC_012029.1"/>
</dbReference>
<dbReference type="SMR" id="B9LR58"/>
<dbReference type="GeneID" id="7400655"/>
<dbReference type="KEGG" id="hla:Hlac_2135"/>
<dbReference type="eggNOG" id="arCOG04281">
    <property type="taxonomic scope" value="Archaea"/>
</dbReference>
<dbReference type="HOGENOM" id="CLU_034626_0_0_2"/>
<dbReference type="Proteomes" id="UP000000740">
    <property type="component" value="Chromosome 1"/>
</dbReference>
<dbReference type="GO" id="GO:0005737">
    <property type="term" value="C:cytoplasm"/>
    <property type="evidence" value="ECO:0007669"/>
    <property type="project" value="TreeGrafter"/>
</dbReference>
<dbReference type="GO" id="GO:0000428">
    <property type="term" value="C:DNA-directed RNA polymerase complex"/>
    <property type="evidence" value="ECO:0007669"/>
    <property type="project" value="UniProtKB-KW"/>
</dbReference>
<dbReference type="GO" id="GO:0000178">
    <property type="term" value="C:exosome (RNase complex)"/>
    <property type="evidence" value="ECO:0007669"/>
    <property type="project" value="InterPro"/>
</dbReference>
<dbReference type="GO" id="GO:1990077">
    <property type="term" value="C:primosome complex"/>
    <property type="evidence" value="ECO:0007669"/>
    <property type="project" value="UniProtKB-KW"/>
</dbReference>
<dbReference type="GO" id="GO:0003899">
    <property type="term" value="F:DNA-directed RNA polymerase activity"/>
    <property type="evidence" value="ECO:0007669"/>
    <property type="project" value="InterPro"/>
</dbReference>
<dbReference type="GO" id="GO:0046872">
    <property type="term" value="F:metal ion binding"/>
    <property type="evidence" value="ECO:0007669"/>
    <property type="project" value="UniProtKB-KW"/>
</dbReference>
<dbReference type="GO" id="GO:0008143">
    <property type="term" value="F:poly(A) binding"/>
    <property type="evidence" value="ECO:0007669"/>
    <property type="project" value="InterPro"/>
</dbReference>
<dbReference type="GO" id="GO:0006269">
    <property type="term" value="P:DNA replication, synthesis of primer"/>
    <property type="evidence" value="ECO:0007669"/>
    <property type="project" value="UniProtKB-UniRule"/>
</dbReference>
<dbReference type="CDD" id="cd01029">
    <property type="entry name" value="TOPRIM_primases"/>
    <property type="match status" value="1"/>
</dbReference>
<dbReference type="Gene3D" id="3.40.1360.10">
    <property type="match status" value="1"/>
</dbReference>
<dbReference type="HAMAP" id="MF_00007">
    <property type="entry name" value="DNA_primase_DnaG_arc"/>
    <property type="match status" value="1"/>
</dbReference>
<dbReference type="InterPro" id="IPR050219">
    <property type="entry name" value="DnaG_primase"/>
</dbReference>
<dbReference type="InterPro" id="IPR020607">
    <property type="entry name" value="Primase_DnaG_arc"/>
</dbReference>
<dbReference type="InterPro" id="IPR034154">
    <property type="entry name" value="TOPRIM_DnaG/twinkle"/>
</dbReference>
<dbReference type="InterPro" id="IPR006171">
    <property type="entry name" value="TOPRIM_dom"/>
</dbReference>
<dbReference type="NCBIfam" id="NF003108">
    <property type="entry name" value="PRK04031.1-1"/>
    <property type="match status" value="1"/>
</dbReference>
<dbReference type="PANTHER" id="PTHR30313">
    <property type="entry name" value="DNA PRIMASE"/>
    <property type="match status" value="1"/>
</dbReference>
<dbReference type="PANTHER" id="PTHR30313:SF2">
    <property type="entry name" value="DNA PRIMASE"/>
    <property type="match status" value="1"/>
</dbReference>
<dbReference type="Pfam" id="PF13662">
    <property type="entry name" value="Toprim_4"/>
    <property type="match status" value="1"/>
</dbReference>
<dbReference type="SMART" id="SM00493">
    <property type="entry name" value="TOPRIM"/>
    <property type="match status" value="1"/>
</dbReference>
<dbReference type="SUPFAM" id="SSF56731">
    <property type="entry name" value="DNA primase core"/>
    <property type="match status" value="1"/>
</dbReference>
<dbReference type="PROSITE" id="PS50880">
    <property type="entry name" value="TOPRIM"/>
    <property type="match status" value="1"/>
</dbReference>
<feature type="chain" id="PRO_1000197502" description="DNA primase DnaG">
    <location>
        <begin position="1"/>
        <end position="505"/>
    </location>
</feature>
<feature type="domain" description="Toprim" evidence="1">
    <location>
        <begin position="167"/>
        <end position="241"/>
    </location>
</feature>
<feature type="region of interest" description="Disordered" evidence="2">
    <location>
        <begin position="268"/>
        <end position="410"/>
    </location>
</feature>
<feature type="compositionally biased region" description="Low complexity" evidence="2">
    <location>
        <begin position="318"/>
        <end position="327"/>
    </location>
</feature>
<feature type="compositionally biased region" description="Acidic residues" evidence="2">
    <location>
        <begin position="349"/>
        <end position="376"/>
    </location>
</feature>
<feature type="compositionally biased region" description="Acidic residues" evidence="2">
    <location>
        <begin position="384"/>
        <end position="402"/>
    </location>
</feature>
<feature type="binding site" evidence="1">
    <location>
        <position position="173"/>
    </location>
    <ligand>
        <name>Mg(2+)</name>
        <dbReference type="ChEBI" id="CHEBI:18420"/>
        <label>1</label>
        <note>catalytic</note>
    </ligand>
</feature>
<feature type="binding site" evidence="1">
    <location>
        <position position="215"/>
    </location>
    <ligand>
        <name>Mg(2+)</name>
        <dbReference type="ChEBI" id="CHEBI:18420"/>
        <label>1</label>
        <note>catalytic</note>
    </ligand>
</feature>
<feature type="binding site" evidence="1">
    <location>
        <position position="215"/>
    </location>
    <ligand>
        <name>Mg(2+)</name>
        <dbReference type="ChEBI" id="CHEBI:18420"/>
        <label>2</label>
    </ligand>
</feature>
<feature type="binding site" evidence="1">
    <location>
        <position position="217"/>
    </location>
    <ligand>
        <name>Mg(2+)</name>
        <dbReference type="ChEBI" id="CHEBI:18420"/>
        <label>2</label>
    </ligand>
</feature>
<reference key="1">
    <citation type="journal article" date="2016" name="Stand. Genomic Sci.">
        <title>Complete genome sequence of the Antarctic Halorubrum lacusprofundi type strain ACAM 34.</title>
        <authorList>
            <person name="Anderson I.J."/>
            <person name="DasSarma P."/>
            <person name="Lucas S."/>
            <person name="Copeland A."/>
            <person name="Lapidus A."/>
            <person name="Del Rio T.G."/>
            <person name="Tice H."/>
            <person name="Dalin E."/>
            <person name="Bruce D.C."/>
            <person name="Goodwin L."/>
            <person name="Pitluck S."/>
            <person name="Sims D."/>
            <person name="Brettin T.S."/>
            <person name="Detter J.C."/>
            <person name="Han C.S."/>
            <person name="Larimer F."/>
            <person name="Hauser L."/>
            <person name="Land M."/>
            <person name="Ivanova N."/>
            <person name="Richardson P."/>
            <person name="Cavicchioli R."/>
            <person name="DasSarma S."/>
            <person name="Woese C.R."/>
            <person name="Kyrpides N.C."/>
        </authorList>
    </citation>
    <scope>NUCLEOTIDE SEQUENCE [LARGE SCALE GENOMIC DNA]</scope>
    <source>
        <strain>ATCC 49239 / DSM 5036 / JCM 8891 / ACAM 34</strain>
    </source>
</reference>
<name>DNAG_HALLT</name>